<comment type="function">
    <text evidence="5 6 7 8 9 10 11">Catalytic component of a P4-ATPase flippase complex which catalyzes the hydrolysis of ATP coupled to the transport of aminophospholipids, phosphatidylserines (PS) and phosphatidylethanolamines (PE), from the outer to the inner leaflet of the plasma membrane (PubMed:24898253, PubMed:24904167, PubMed:26799398, PubMed:30018401). Major PS-flippase in immune cell subsets (PubMed:30018401). In erythrocyte plasma membrane, it is required to maintain PS in the inner leaflet preventing its exposure on the surface. This asymmetric distribution is critical for the survival of erythrocytes in circulation since externalized PS is a phagocytic signal for erythrocyte clearance by splenic macrophages (PubMed:24898253). Required for B cell differentiation past the pro-B cell stage (PubMed:21423173). Seems to mediate PS flipping in pro-B cells (PubMed:21423172, PubMed:26799398). May be involved in the transport of cholestatic bile acids (PubMed:21518881).</text>
</comment>
<comment type="catalytic activity">
    <reaction evidence="6 8 9 10 11">
        <text>ATP + H2O + phospholipidSide 1 = ADP + phosphate + phospholipidSide 2.</text>
        <dbReference type="EC" id="7.6.2.1"/>
    </reaction>
</comment>
<comment type="catalytic activity">
    <reaction evidence="6 8 9 10 11">
        <text>a 1,2-diacyl-sn-glycero-3-phospho-L-serine(out) + ATP + H2O = a 1,2-diacyl-sn-glycero-3-phospho-L-serine(in) + ADP + phosphate + H(+)</text>
        <dbReference type="Rhea" id="RHEA:38567"/>
        <dbReference type="ChEBI" id="CHEBI:15377"/>
        <dbReference type="ChEBI" id="CHEBI:15378"/>
        <dbReference type="ChEBI" id="CHEBI:30616"/>
        <dbReference type="ChEBI" id="CHEBI:43474"/>
        <dbReference type="ChEBI" id="CHEBI:57262"/>
        <dbReference type="ChEBI" id="CHEBI:456216"/>
    </reaction>
    <physiologicalReaction direction="left-to-right" evidence="15 16 17 18 19">
        <dbReference type="Rhea" id="RHEA:38568"/>
    </physiologicalReaction>
</comment>
<comment type="catalytic activity">
    <reaction evidence="9 10 11">
        <text>a 1,2-diacyl-sn-glycero-3-phosphoethanolamine(out) + ATP + H2O = a 1,2-diacyl-sn-glycero-3-phosphoethanolamine(in) + ADP + phosphate + H(+)</text>
        <dbReference type="Rhea" id="RHEA:66132"/>
        <dbReference type="ChEBI" id="CHEBI:15377"/>
        <dbReference type="ChEBI" id="CHEBI:15378"/>
        <dbReference type="ChEBI" id="CHEBI:30616"/>
        <dbReference type="ChEBI" id="CHEBI:43474"/>
        <dbReference type="ChEBI" id="CHEBI:64612"/>
        <dbReference type="ChEBI" id="CHEBI:456216"/>
    </reaction>
    <physiologicalReaction direction="left-to-right" evidence="17 18 19">
        <dbReference type="Rhea" id="RHEA:66133"/>
    </physiologicalReaction>
</comment>
<comment type="cofactor">
    <cofactor evidence="3">
        <name>Mg(2+)</name>
        <dbReference type="ChEBI" id="CHEBI:18420"/>
    </cofactor>
</comment>
<comment type="biophysicochemical properties">
    <kinetics>
        <KM evidence="11">1440 uM for ATP</KM>
        <Vmax evidence="11">48.3 umol/min/mg enzyme toward ATP</Vmax>
    </kinetics>
</comment>
<comment type="subunit">
    <text evidence="11">Component of a P4-ATPase flippase complex which consists of a catalytic alpha subunit ATP11C and an accessory beta subunit TMEM30A.</text>
</comment>
<comment type="subcellular location">
    <subcellularLocation>
        <location evidence="2">Cell membrane</location>
        <topology evidence="4">Multi-pass membrane protein</topology>
    </subcellularLocation>
    <subcellularLocation>
        <location evidence="2">Endoplasmic reticulum membrane</location>
        <topology evidence="4">Multi-pass membrane protein</topology>
    </subcellularLocation>
    <subcellularLocation>
        <location evidence="2">Early endosome membrane</location>
        <topology evidence="4">Multi-pass membrane protein</topology>
    </subcellularLocation>
    <subcellularLocation>
        <location evidence="2">Recycling endosome membrane</location>
        <topology evidence="4">Multi-pass membrane protein</topology>
    </subcellularLocation>
    <text evidence="2">Efficient exit from the endoplasmic reticulum requires the presence of TMEM30A. Internalized via clathrin-dependent endocytosis in response to ca(2+) signaling induced by G-protein coupled serotonin and histamine receptors, HTR2A and HRH1 respectively.</text>
</comment>
<comment type="alternative products">
    <event type="alternative splicing"/>
    <isoform>
        <id>Q9QZW0-1</id>
        <name>1</name>
        <sequence type="displayed"/>
    </isoform>
    <isoform>
        <id>Q9QZW0-2</id>
        <name>2</name>
        <sequence type="described" ref="VSP_022222 VSP_022223"/>
    </isoform>
</comment>
<comment type="tissue specificity">
    <text evidence="9 11">Widely expressed. Expressed in retina, brain, liver and testes (at protein level) (PubMed:30018401). Expressed in lung, bone marrow, lymph nodes, prostate, ovary and uterus (PubMed:24904167). Expressed in fetus (PubMed:24904167).</text>
</comment>
<comment type="domain">
    <text evidence="2">The di-leucine motif is required for sorting to clathrin-coated endosomes upon ca(2+)-dependent PRKCA activation.</text>
</comment>
<comment type="PTM">
    <text evidence="2">Proteolytically cleaved by CASP3, CASP6 and CASP7.</text>
</comment>
<comment type="PTM">
    <text evidence="2">Phosphorylated at Ser-1113 likely by PRKCA; this creates a functional di-leucine motif that is sufficient for endocytosis.</text>
</comment>
<comment type="disease">
    <text evidence="6 7 8">Mice defective in Atp11c show defective B lymphopoiesis, specifically in mature bone marrow, pronounced stomatocytosis associated with anemia, hyperbilirubinemia linked to mild cholestasis and hepatocellular carcinoma.</text>
</comment>
<comment type="similarity">
    <text evidence="14">Belongs to the cation transport ATPase (P-type) (TC 3.A.3) family. Type IV subfamily.</text>
</comment>
<evidence type="ECO:0000250" key="1">
    <source>
        <dbReference type="UniProtKB" id="P04191"/>
    </source>
</evidence>
<evidence type="ECO:0000250" key="2">
    <source>
        <dbReference type="UniProtKB" id="Q8NB49"/>
    </source>
</evidence>
<evidence type="ECO:0000250" key="3">
    <source>
        <dbReference type="UniProtKB" id="Q9Y2Q0"/>
    </source>
</evidence>
<evidence type="ECO:0000255" key="4"/>
<evidence type="ECO:0000269" key="5">
    <source>
    </source>
</evidence>
<evidence type="ECO:0000269" key="6">
    <source>
    </source>
</evidence>
<evidence type="ECO:0000269" key="7">
    <source>
    </source>
</evidence>
<evidence type="ECO:0000269" key="8">
    <source>
    </source>
</evidence>
<evidence type="ECO:0000269" key="9">
    <source>
    </source>
</evidence>
<evidence type="ECO:0000269" key="10">
    <source>
    </source>
</evidence>
<evidence type="ECO:0000269" key="11">
    <source>
    </source>
</evidence>
<evidence type="ECO:0000303" key="12">
    <source>
    </source>
</evidence>
<evidence type="ECO:0000303" key="13">
    <source>
    </source>
</evidence>
<evidence type="ECO:0000305" key="14"/>
<evidence type="ECO:0000305" key="15">
    <source>
    </source>
</evidence>
<evidence type="ECO:0000305" key="16">
    <source>
    </source>
</evidence>
<evidence type="ECO:0000305" key="17">
    <source>
    </source>
</evidence>
<evidence type="ECO:0000305" key="18">
    <source>
    </source>
</evidence>
<evidence type="ECO:0000305" key="19">
    <source>
    </source>
</evidence>
<evidence type="ECO:0000312" key="20">
    <source>
        <dbReference type="MGI" id="MGI:1859661"/>
    </source>
</evidence>
<gene>
    <name evidence="13 20" type="primary">Atp11c</name>
</gene>
<sequence>MFRRTLNRLCAGEEKRVGTRTVFVGNHPISGTEPYIAQRFCDNRIVSSKYTLWNFLPKNLFEQFRRIANFYFLIIFLVQVTVDTPTSPVTSGLPLFFVITVTAIKQGYEDWLRHRADNEVNKSAVYIIENAKRVRKESEKIKVGDVVEVQANETFPCDLILLSSCTTDGTCYVTTASLDGESNCKTHYAVRDTIALCTAESIDNLRATIECEQPQPDLYRFVGRISIYSNSIEAVARSLGPENLLLKGATLKNTKKIYGVAVYTGMETKMALNYQGKSQKCSAVEKSINAFLIVYLFILLTKAAVCTTLKYVWQSSPYNDEPWYNQKTQKERETFQVLKMFTDFLSFMVLFNFIIPVSMYVTVEMQKFLGSFFISWDKDFFDEEINEGALVNTSDLNEELGQVDYVFTDKTGTLTENSMEFIECCIDGHKYKGTTQEVDGLSQTDGPLAYFDKADKNREALFLRALCLCHTVEMKTNDDVDGPVEGAGFTYISSSPDEIALVKGAKRFGFTFLGNQNGYIRVENQRKEIEEYELLHTLNFDSVRRRMSVIVRTQKGDILLFCKGADSSIFPRVHSHQIELTKDHVERNAMDGYRTLCVAFKEIPPDDFERINAQLVEAKMALQDREEKLEKVFDEIETNMNLIGATAVEDKLQDQAAETIEALHAAGLKVWVLTGDKMETAKSTCYACRLFQTNTELLELTTKTIEESERKEDRLHELLIEYRKKLLHEFPKSTRSLKKAWTEHQEYGLIIDGSTLSLILNSSQDCSSNNYKSIFLQICMKCTAVLCCRMAPLQKAQIVRMVKNLKGSPITLSIGDGANDVSMILESHVGIGIKGKEGRQAARNSDYSVPKFKHLKKLLLVHGHLYYVRIAHLVQYFFYKNLCFILPQFLYQFFCGFSQQPLYDAAYLTMYNICFTSLPILAYSLLEQHINIDTLTADPRLYMKITGNAMLQLGPFLHWTFLAAFEGTVFFFGTYFLFQTSSLEDNGKIYGNWTFGTIVFTVLVFTVTLKLALDTRFWTWINHFVIWGSLAFYVFFSFFWGGIIWPFLKQQRMYFVFAQMLCSVSTWLAIILLIFISLFPEILLIVVKNVRRRSARRNLSCRRASDSLSARPSVRPLLLRTFSDESNIL</sequence>
<accession>Q9QZW0</accession>
<accession>Q3KQR4</accession>
<organism>
    <name type="scientific">Mus musculus</name>
    <name type="common">Mouse</name>
    <dbReference type="NCBI Taxonomy" id="10090"/>
    <lineage>
        <taxon>Eukaryota</taxon>
        <taxon>Metazoa</taxon>
        <taxon>Chordata</taxon>
        <taxon>Craniata</taxon>
        <taxon>Vertebrata</taxon>
        <taxon>Euteleostomi</taxon>
        <taxon>Mammalia</taxon>
        <taxon>Eutheria</taxon>
        <taxon>Euarchontoglires</taxon>
        <taxon>Glires</taxon>
        <taxon>Rodentia</taxon>
        <taxon>Myomorpha</taxon>
        <taxon>Muroidea</taxon>
        <taxon>Muridae</taxon>
        <taxon>Murinae</taxon>
        <taxon>Mus</taxon>
        <taxon>Mus</taxon>
    </lineage>
</organism>
<name>AT11C_MOUSE</name>
<keyword id="KW-0025">Alternative splicing</keyword>
<keyword id="KW-0067">ATP-binding</keyword>
<keyword id="KW-1003">Cell membrane</keyword>
<keyword id="KW-0175">Coiled coil</keyword>
<keyword id="KW-0256">Endoplasmic reticulum</keyword>
<keyword id="KW-0967">Endosome</keyword>
<keyword id="KW-0445">Lipid transport</keyword>
<keyword id="KW-0460">Magnesium</keyword>
<keyword id="KW-0472">Membrane</keyword>
<keyword id="KW-0479">Metal-binding</keyword>
<keyword id="KW-0547">Nucleotide-binding</keyword>
<keyword id="KW-0597">Phosphoprotein</keyword>
<keyword id="KW-1185">Reference proteome</keyword>
<keyword id="KW-1278">Translocase</keyword>
<keyword id="KW-0812">Transmembrane</keyword>
<keyword id="KW-1133">Transmembrane helix</keyword>
<keyword id="KW-0813">Transport</keyword>
<reference key="1">
    <citation type="journal article" date="2004" name="Genome Res.">
        <title>The status, quality, and expansion of the NIH full-length cDNA project: the Mammalian Gene Collection (MGC).</title>
        <authorList>
            <consortium name="The MGC Project Team"/>
        </authorList>
    </citation>
    <scope>NUCLEOTIDE SEQUENCE [LARGE SCALE MRNA]</scope>
    <source>
        <tissue>Thyroid</tissue>
    </source>
</reference>
<reference key="2">
    <citation type="journal article" date="1999" name="Physiol. Genomics">
        <title>Differential expression of putative transbilayer amphipath transporters.</title>
        <authorList>
            <person name="Halleck M.S."/>
            <person name="Lawler J.F. Jr."/>
            <person name="Blackshaw S."/>
            <person name="Gao L."/>
            <person name="Nagarajan P."/>
            <person name="Hacker C."/>
            <person name="Pyle S."/>
            <person name="Newman J.T."/>
            <person name="Nakanishi Y."/>
            <person name="Ando H."/>
            <person name="Weinstock D."/>
            <person name="Williamson P.L."/>
            <person name="Schlegel R.A."/>
        </authorList>
    </citation>
    <scope>NUCLEOTIDE SEQUENCE [MRNA] OF 767-1129 (ISOFORM 2)</scope>
    <source>
        <strain>C57BL/6J</strain>
        <tissue>Mammary gland</tissue>
    </source>
</reference>
<reference key="3">
    <citation type="journal article" date="2010" name="Cell">
        <title>A tissue-specific atlas of mouse protein phosphorylation and expression.</title>
        <authorList>
            <person name="Huttlin E.L."/>
            <person name="Jedrychowski M.P."/>
            <person name="Elias J.E."/>
            <person name="Goswami T."/>
            <person name="Rad R."/>
            <person name="Beausoleil S.A."/>
            <person name="Villen J."/>
            <person name="Haas W."/>
            <person name="Sowa M.E."/>
            <person name="Gygi S.P."/>
        </authorList>
    </citation>
    <scope>IDENTIFICATION BY MASS SPECTROMETRY [LARGE SCALE ANALYSIS]</scope>
    <source>
        <tissue>Brown adipose tissue</tissue>
        <tissue>Kidney</tissue>
        <tissue>Liver</tissue>
        <tissue>Spleen</tissue>
    </source>
</reference>
<reference key="4">
    <citation type="journal article" date="2011" name="Nat. Immunol.">
        <title>The P4-type ATPase ATP11C is essential for B lymphopoiesis in adult bone marrow.</title>
        <authorList>
            <person name="Siggs O.M."/>
            <person name="Arnold C.N."/>
            <person name="Huber C."/>
            <person name="Pirie E."/>
            <person name="Xia Y."/>
            <person name="Lin P."/>
            <person name="Nemazee D."/>
            <person name="Beutler B."/>
        </authorList>
    </citation>
    <scope>FUNCTION</scope>
</reference>
<reference key="5">
    <citation type="journal article" date="2011" name="Nat. Immunol.">
        <title>ATP11C is critical for the internalization of phosphatidylserine and differentiation of B lymphocytes.</title>
        <authorList>
            <person name="Yabas M."/>
            <person name="Teh C.E."/>
            <person name="Frankenreiter S."/>
            <person name="Lal D."/>
            <person name="Roots C.M."/>
            <person name="Whittle B."/>
            <person name="Andrews D.T."/>
            <person name="Zhang Y."/>
            <person name="Teoh N.C."/>
            <person name="Sprent J."/>
            <person name="Tze L.E."/>
            <person name="Kucharska E.M."/>
            <person name="Kofler J."/>
            <person name="Farell G.C."/>
            <person name="Broer S."/>
            <person name="Goodnow C.C."/>
            <person name="Enders A."/>
        </authorList>
    </citation>
    <scope>FUNCTION</scope>
    <scope>CATALYTIC ACTIVITY</scope>
    <scope>INVOLVEMENT IN DEFECTIVE LYMPHOPOIESIS</scope>
</reference>
<reference key="6">
    <citation type="journal article" date="2011" name="Proc. Natl. Acad. Sci. U.S.A.">
        <title>X-linked cholestasis in mouse due to mutations of the P4-ATPase ATP11C.</title>
        <authorList>
            <person name="Siggs O.M."/>
            <person name="Schnabl B."/>
            <person name="Webb B."/>
            <person name="Beutler B."/>
        </authorList>
    </citation>
    <scope>FUNCTION</scope>
    <scope>INVOLVEMENT IN CHOLESTASIS</scope>
</reference>
<reference key="7">
    <citation type="journal article" date="2014" name="J. Biol. Chem.">
        <title>Mice deficient in the putative phospholipid flippase ATP11C exhibit altered erythrocyte shape, anemia, and reduced erythrocyte life span.</title>
        <authorList>
            <person name="Yabas M."/>
            <person name="Coupland L.A."/>
            <person name="Cromer D."/>
            <person name="Winterberg M."/>
            <person name="Teoh N.C."/>
            <person name="D'Rozario J."/>
            <person name="Kirk K."/>
            <person name="Broeer S."/>
            <person name="Parish C.R."/>
            <person name="Enders A."/>
        </authorList>
    </citation>
    <scope>FUNCTION</scope>
    <scope>CATALYTIC ACTIVITY</scope>
    <scope>INVOLVEMENT IN ANEMIA</scope>
</reference>
<reference key="8">
    <citation type="journal article" date="2014" name="Science">
        <title>Caspase-mediated cleavage of phospholipid flippase for apoptotic phosphatidylserine exposure.</title>
        <authorList>
            <person name="Segawa K."/>
            <person name="Kurata S."/>
            <person name="Yanagihashi Y."/>
            <person name="Brummelkamp T.R."/>
            <person name="Matsuda F."/>
            <person name="Nagata S."/>
        </authorList>
    </citation>
    <scope>FUNCTION</scope>
    <scope>CATALYTIC ACTIVITY</scope>
    <scope>TISSUE SPECIFICITY</scope>
</reference>
<reference key="9">
    <citation type="journal article" date="2016" name="PLoS ONE">
        <title>ATP11C Facilitates Phospholipid Translocation across the Plasma Membrane of All Leukocytes.</title>
        <authorList>
            <person name="Yabas M."/>
            <person name="Jing W."/>
            <person name="Shafik S."/>
            <person name="Broeer S."/>
            <person name="Enders A."/>
        </authorList>
    </citation>
    <scope>FUNCTION</scope>
    <scope>CATALYTIC ACTIVITY</scope>
</reference>
<reference key="10">
    <citation type="journal article" date="2018" name="Sci. Rep.">
        <title>Proteomic Analysis and Functional Characterization of P4-ATPase Phospholipid Flippases from Murine Tissues.</title>
        <authorList>
            <person name="Wang J."/>
            <person name="Molday L.L."/>
            <person name="Hii T."/>
            <person name="Coleman J.A."/>
            <person name="Wen T."/>
            <person name="Andersen J.P."/>
            <person name="Molday R.S."/>
        </authorList>
    </citation>
    <scope>FUNCTION</scope>
    <scope>CATALYTIC ACTIVITY</scope>
    <scope>BIOPHYSICOCHEMICAL PROPERTIES</scope>
    <scope>INTERACTION WITH TMEM30A</scope>
    <scope>TISSUE SPECIFICITY</scope>
    <scope>MUTAGENESIS OF GLU-181</scope>
</reference>
<protein>
    <recommendedName>
        <fullName>Phospholipid-transporting ATPase 11C</fullName>
        <ecNumber evidence="6 8 9 10 11">7.6.2.1</ecNumber>
    </recommendedName>
    <alternativeName>
        <fullName>ATPase class VI type 11C</fullName>
    </alternativeName>
    <alternativeName>
        <fullName>P4-ATPase flippase complex alpha subunit ATP11C</fullName>
    </alternativeName>
</protein>
<proteinExistence type="evidence at protein level"/>
<feature type="chain" id="PRO_0000046374" description="Phospholipid-transporting ATPase 11C">
    <location>
        <begin position="1"/>
        <end position="1129"/>
    </location>
</feature>
<feature type="topological domain" description="Cytoplasmic" evidence="4">
    <location>
        <begin position="1"/>
        <end position="83"/>
    </location>
</feature>
<feature type="transmembrane region" description="Helical" evidence="4">
    <location>
        <begin position="84"/>
        <end position="104"/>
    </location>
</feature>
<feature type="topological domain" description="Extracellular" evidence="4">
    <location>
        <begin position="105"/>
        <end position="287"/>
    </location>
</feature>
<feature type="transmembrane region" description="Helical" evidence="4">
    <location>
        <begin position="288"/>
        <end position="308"/>
    </location>
</feature>
<feature type="topological domain" description="Cytoplasmic" evidence="4">
    <location>
        <begin position="309"/>
        <end position="343"/>
    </location>
</feature>
<feature type="transmembrane region" description="Helical" evidence="4">
    <location>
        <begin position="344"/>
        <end position="364"/>
    </location>
</feature>
<feature type="topological domain" description="Extracellular" evidence="4">
    <location>
        <begin position="365"/>
        <end position="876"/>
    </location>
</feature>
<feature type="transmembrane region" description="Helical" evidence="4">
    <location>
        <begin position="877"/>
        <end position="897"/>
    </location>
</feature>
<feature type="topological domain" description="Cytoplasmic" evidence="4">
    <location>
        <begin position="898"/>
        <end position="905"/>
    </location>
</feature>
<feature type="transmembrane region" description="Helical" evidence="4">
    <location>
        <begin position="906"/>
        <end position="926"/>
    </location>
</feature>
<feature type="topological domain" description="Extracellular" evidence="4">
    <location>
        <begin position="927"/>
        <end position="952"/>
    </location>
</feature>
<feature type="transmembrane region" description="Helical" evidence="4">
    <location>
        <begin position="953"/>
        <end position="973"/>
    </location>
</feature>
<feature type="topological domain" description="Cytoplasmic" evidence="4">
    <location>
        <begin position="974"/>
        <end position="988"/>
    </location>
</feature>
<feature type="transmembrane region" description="Helical" evidence="4">
    <location>
        <begin position="989"/>
        <end position="1009"/>
    </location>
</feature>
<feature type="topological domain" description="Extracellular" evidence="4">
    <location>
        <begin position="1010"/>
        <end position="1023"/>
    </location>
</feature>
<feature type="transmembrane region" description="Helical" evidence="4">
    <location>
        <begin position="1024"/>
        <end position="1044"/>
    </location>
</feature>
<feature type="topological domain" description="Cytoplasmic" evidence="4">
    <location>
        <begin position="1045"/>
        <end position="1066"/>
    </location>
</feature>
<feature type="transmembrane region" description="Helical" evidence="4">
    <location>
        <begin position="1067"/>
        <end position="1087"/>
    </location>
</feature>
<feature type="topological domain" description="Extracellular" evidence="4">
    <location>
        <begin position="1088"/>
        <end position="1129"/>
    </location>
</feature>
<feature type="coiled-coil region" evidence="4">
    <location>
        <begin position="607"/>
        <end position="643"/>
    </location>
</feature>
<feature type="coiled-coil region" evidence="4">
    <location>
        <begin position="695"/>
        <end position="726"/>
    </location>
</feature>
<feature type="short sequence motif" description="Di-leucine motif" evidence="2">
    <location>
        <begin position="1113"/>
        <end position="1118"/>
    </location>
</feature>
<feature type="active site" description="4-aspartylphosphate intermediate" evidence="3">
    <location>
        <position position="409"/>
    </location>
</feature>
<feature type="binding site" evidence="3">
    <location>
        <position position="409"/>
    </location>
    <ligand>
        <name>ATP</name>
        <dbReference type="ChEBI" id="CHEBI:30616"/>
    </ligand>
</feature>
<feature type="binding site" evidence="3">
    <location>
        <position position="409"/>
    </location>
    <ligand>
        <name>Mg(2+)</name>
        <dbReference type="ChEBI" id="CHEBI:18420"/>
    </ligand>
</feature>
<feature type="binding site" evidence="3">
    <location>
        <position position="410"/>
    </location>
    <ligand>
        <name>ATP</name>
        <dbReference type="ChEBI" id="CHEBI:30616"/>
    </ligand>
</feature>
<feature type="binding site" evidence="3">
    <location>
        <position position="411"/>
    </location>
    <ligand>
        <name>ATP</name>
        <dbReference type="ChEBI" id="CHEBI:30616"/>
    </ligand>
</feature>
<feature type="binding site" evidence="3">
    <location>
        <position position="411"/>
    </location>
    <ligand>
        <name>Mg(2+)</name>
        <dbReference type="ChEBI" id="CHEBI:18420"/>
    </ligand>
</feature>
<feature type="binding site" evidence="1">
    <location>
        <position position="498"/>
    </location>
    <ligand>
        <name>ATP</name>
        <dbReference type="ChEBI" id="CHEBI:30616"/>
    </ligand>
</feature>
<feature type="binding site" evidence="3">
    <location>
        <position position="540"/>
    </location>
    <ligand>
        <name>ATP</name>
        <dbReference type="ChEBI" id="CHEBI:30616"/>
    </ligand>
</feature>
<feature type="binding site" evidence="1">
    <location>
        <position position="563"/>
    </location>
    <ligand>
        <name>ATP</name>
        <dbReference type="ChEBI" id="CHEBI:30616"/>
    </ligand>
</feature>
<feature type="binding site" evidence="1">
    <location>
        <position position="594"/>
    </location>
    <ligand>
        <name>ATP</name>
        <dbReference type="ChEBI" id="CHEBI:30616"/>
    </ligand>
</feature>
<feature type="binding site" evidence="1">
    <location>
        <position position="674"/>
    </location>
    <ligand>
        <name>ATP</name>
        <dbReference type="ChEBI" id="CHEBI:30616"/>
    </ligand>
</feature>
<feature type="binding site" evidence="1">
    <location>
        <position position="675"/>
    </location>
    <ligand>
        <name>ATP</name>
        <dbReference type="ChEBI" id="CHEBI:30616"/>
    </ligand>
</feature>
<feature type="binding site" evidence="1">
    <location>
        <position position="676"/>
    </location>
    <ligand>
        <name>ATP</name>
        <dbReference type="ChEBI" id="CHEBI:30616"/>
    </ligand>
</feature>
<feature type="binding site" evidence="1">
    <location>
        <position position="789"/>
    </location>
    <ligand>
        <name>ATP</name>
        <dbReference type="ChEBI" id="CHEBI:30616"/>
    </ligand>
</feature>
<feature type="binding site" evidence="1">
    <location>
        <position position="795"/>
    </location>
    <ligand>
        <name>ATP</name>
        <dbReference type="ChEBI" id="CHEBI:30616"/>
    </ligand>
</feature>
<feature type="binding site" evidence="2">
    <location>
        <position position="816"/>
    </location>
    <ligand>
        <name>Mg(2+)</name>
        <dbReference type="ChEBI" id="CHEBI:18420"/>
    </ligand>
</feature>
<feature type="binding site" evidence="3">
    <location>
        <position position="819"/>
    </location>
    <ligand>
        <name>ATP</name>
        <dbReference type="ChEBI" id="CHEBI:30616"/>
    </ligand>
</feature>
<feature type="binding site" evidence="3">
    <location>
        <position position="820"/>
    </location>
    <ligand>
        <name>ATP</name>
        <dbReference type="ChEBI" id="CHEBI:30616"/>
    </ligand>
</feature>
<feature type="binding site" evidence="2">
    <location>
        <position position="820"/>
    </location>
    <ligand>
        <name>Mg(2+)</name>
        <dbReference type="ChEBI" id="CHEBI:18420"/>
    </ligand>
</feature>
<feature type="site" description="Cleavage; by CASP3, CASP6 and CASP7" evidence="2">
    <location>
        <begin position="439"/>
        <end position="440"/>
    </location>
</feature>
<feature type="site" description="Cleavage; by CASP3" evidence="2">
    <location>
        <begin position="445"/>
        <end position="446"/>
    </location>
</feature>
<feature type="site" description="Cleavage; by CASP3 and CASP7" evidence="2">
    <location>
        <begin position="481"/>
        <end position="482"/>
    </location>
</feature>
<feature type="modified residue" description="Phosphoserine" evidence="2">
    <location>
        <position position="442"/>
    </location>
</feature>
<feature type="modified residue" description="Phosphoserine" evidence="2">
    <location>
        <position position="1105"/>
    </location>
</feature>
<feature type="modified residue" description="Phosphoserine" evidence="2">
    <location>
        <position position="1113"/>
    </location>
</feature>
<feature type="modified residue" description="Phosphoserine" evidence="2">
    <location>
        <position position="1123"/>
    </location>
</feature>
<feature type="splice variant" id="VSP_022222" description="In isoform 2." evidence="12">
    <location>
        <begin position="833"/>
        <end position="835"/>
    </location>
</feature>
<feature type="splice variant" id="VSP_022223" description="In isoform 2." evidence="12">
    <original>RNLSCRRASDSLSARPSVRPLLLRTFSDESNIL</original>
    <variation>NPNLELPMLLSYKHIDRGCS</variation>
    <location>
        <begin position="1097"/>
        <end position="1129"/>
    </location>
</feature>
<feature type="mutagenesis site" description="Impairs ATPase activity." evidence="11">
    <original>E</original>
    <variation>Q</variation>
    <location>
        <position position="181"/>
    </location>
</feature>
<feature type="sequence conflict" description="In Ref. 2; AAF09445." evidence="14" ref="2">
    <original>LCCRMA</original>
    <variation>VCCADQ</variation>
    <location>
        <begin position="786"/>
        <end position="791"/>
    </location>
</feature>
<dbReference type="EC" id="7.6.2.1" evidence="6 8 9 10 11"/>
<dbReference type="EMBL" id="BC106087">
    <property type="protein sequence ID" value="AAI06088.1"/>
    <property type="molecule type" value="mRNA"/>
</dbReference>
<dbReference type="EMBL" id="AF156547">
    <property type="protein sequence ID" value="AAF09445.1"/>
    <property type="molecule type" value="mRNA"/>
</dbReference>
<dbReference type="CCDS" id="CCDS40988.1">
    <molecule id="Q9QZW0-1"/>
</dbReference>
<dbReference type="RefSeq" id="NP_001032952.1">
    <molecule id="Q9QZW0-1"/>
    <property type="nucleotide sequence ID" value="NM_001037863.2"/>
</dbReference>
<dbReference type="RefSeq" id="XP_006528153.1">
    <molecule id="Q9QZW0-1"/>
    <property type="nucleotide sequence ID" value="XM_006528090.5"/>
</dbReference>
<dbReference type="RefSeq" id="XP_006528154.1">
    <molecule id="Q9QZW0-1"/>
    <property type="nucleotide sequence ID" value="XM_006528091.5"/>
</dbReference>
<dbReference type="RefSeq" id="XP_011245917.1">
    <property type="nucleotide sequence ID" value="XM_011247615.2"/>
</dbReference>
<dbReference type="RefSeq" id="XP_011245918.1">
    <property type="nucleotide sequence ID" value="XM_011247616.1"/>
</dbReference>
<dbReference type="SMR" id="Q9QZW0"/>
<dbReference type="BioGRID" id="236409">
    <property type="interactions" value="2"/>
</dbReference>
<dbReference type="FunCoup" id="Q9QZW0">
    <property type="interactions" value="374"/>
</dbReference>
<dbReference type="STRING" id="10090.ENSMUSP00000099066"/>
<dbReference type="iPTMnet" id="Q9QZW0"/>
<dbReference type="PhosphoSitePlus" id="Q9QZW0"/>
<dbReference type="SwissPalm" id="Q9QZW0"/>
<dbReference type="jPOST" id="Q9QZW0"/>
<dbReference type="PaxDb" id="10090-ENSMUSP00000099066"/>
<dbReference type="ProteomicsDB" id="281929">
    <molecule id="Q9QZW0-1"/>
</dbReference>
<dbReference type="ProteomicsDB" id="281930">
    <molecule id="Q9QZW0-2"/>
</dbReference>
<dbReference type="Pumba" id="Q9QZW0"/>
<dbReference type="Antibodypedia" id="30516">
    <property type="antibodies" value="105 antibodies from 23 providers"/>
</dbReference>
<dbReference type="DNASU" id="320940"/>
<dbReference type="Ensembl" id="ENSMUST00000101527.3">
    <molecule id="Q9QZW0-1"/>
    <property type="protein sequence ID" value="ENSMUSP00000099066.3"/>
    <property type="gene ID" value="ENSMUSG00000062949.14"/>
</dbReference>
<dbReference type="GeneID" id="320940"/>
<dbReference type="KEGG" id="mmu:320940"/>
<dbReference type="UCSC" id="uc009tia.1">
    <molecule id="Q9QZW0-1"/>
    <property type="organism name" value="mouse"/>
</dbReference>
<dbReference type="AGR" id="MGI:1859661"/>
<dbReference type="CTD" id="286410"/>
<dbReference type="MGI" id="MGI:1859661">
    <property type="gene designation" value="Atp11c"/>
</dbReference>
<dbReference type="VEuPathDB" id="HostDB:ENSMUSG00000062949"/>
<dbReference type="eggNOG" id="KOG0206">
    <property type="taxonomic scope" value="Eukaryota"/>
</dbReference>
<dbReference type="GeneTree" id="ENSGT00940000158878"/>
<dbReference type="InParanoid" id="Q9QZW0"/>
<dbReference type="OMA" id="EYNIAYN"/>
<dbReference type="OrthoDB" id="56374at9989"/>
<dbReference type="PhylomeDB" id="Q9QZW0"/>
<dbReference type="BRENDA" id="7.6.2.1">
    <property type="organism ID" value="3474"/>
</dbReference>
<dbReference type="Reactome" id="R-MMU-936837">
    <property type="pathway name" value="Ion transport by P-type ATPases"/>
</dbReference>
<dbReference type="SABIO-RK" id="Q9QZW0"/>
<dbReference type="BioGRID-ORCS" id="320940">
    <property type="hits" value="1 hit in 78 CRISPR screens"/>
</dbReference>
<dbReference type="ChiTaRS" id="Atp11c">
    <property type="organism name" value="mouse"/>
</dbReference>
<dbReference type="PRO" id="PR:Q9QZW0"/>
<dbReference type="Proteomes" id="UP000000589">
    <property type="component" value="Chromosome X"/>
</dbReference>
<dbReference type="RNAct" id="Q9QZW0">
    <property type="molecule type" value="protein"/>
</dbReference>
<dbReference type="Bgee" id="ENSMUSG00000062949">
    <property type="expression patterns" value="Expressed in liver and 70 other cell types or tissues"/>
</dbReference>
<dbReference type="ExpressionAtlas" id="Q9QZW0">
    <property type="expression patterns" value="baseline and differential"/>
</dbReference>
<dbReference type="GO" id="GO:0031901">
    <property type="term" value="C:early endosome membrane"/>
    <property type="evidence" value="ECO:0007669"/>
    <property type="project" value="UniProtKB-SubCell"/>
</dbReference>
<dbReference type="GO" id="GO:0005789">
    <property type="term" value="C:endoplasmic reticulum membrane"/>
    <property type="evidence" value="ECO:0007669"/>
    <property type="project" value="UniProtKB-SubCell"/>
</dbReference>
<dbReference type="GO" id="GO:0005886">
    <property type="term" value="C:plasma membrane"/>
    <property type="evidence" value="ECO:0007669"/>
    <property type="project" value="UniProtKB-SubCell"/>
</dbReference>
<dbReference type="GO" id="GO:0055038">
    <property type="term" value="C:recycling endosome membrane"/>
    <property type="evidence" value="ECO:0007669"/>
    <property type="project" value="UniProtKB-SubCell"/>
</dbReference>
<dbReference type="GO" id="GO:0005524">
    <property type="term" value="F:ATP binding"/>
    <property type="evidence" value="ECO:0007669"/>
    <property type="project" value="UniProtKB-KW"/>
</dbReference>
<dbReference type="GO" id="GO:0016887">
    <property type="term" value="F:ATP hydrolysis activity"/>
    <property type="evidence" value="ECO:0007669"/>
    <property type="project" value="InterPro"/>
</dbReference>
<dbReference type="GO" id="GO:0000287">
    <property type="term" value="F:magnesium ion binding"/>
    <property type="evidence" value="ECO:0007669"/>
    <property type="project" value="InterPro"/>
</dbReference>
<dbReference type="GO" id="GO:0090556">
    <property type="term" value="F:phosphatidylserine floppase activity"/>
    <property type="evidence" value="ECO:0007669"/>
    <property type="project" value="RHEA"/>
</dbReference>
<dbReference type="GO" id="GO:0045332">
    <property type="term" value="P:phospholipid translocation"/>
    <property type="evidence" value="ECO:0000315"/>
    <property type="project" value="UniProtKB"/>
</dbReference>
<dbReference type="GO" id="GO:0045579">
    <property type="term" value="P:positive regulation of B cell differentiation"/>
    <property type="evidence" value="ECO:0000315"/>
    <property type="project" value="UniProtKB"/>
</dbReference>
<dbReference type="GO" id="GO:0002329">
    <property type="term" value="P:pre-B cell differentiation"/>
    <property type="evidence" value="ECO:0000315"/>
    <property type="project" value="UniProtKB"/>
</dbReference>
<dbReference type="CDD" id="cd02073">
    <property type="entry name" value="P-type_ATPase_APLT_Dnf-like"/>
    <property type="match status" value="1"/>
</dbReference>
<dbReference type="FunFam" id="2.70.150.10:FF:000009">
    <property type="entry name" value="Phospholipid-transporting ATPase"/>
    <property type="match status" value="1"/>
</dbReference>
<dbReference type="FunFam" id="3.40.1110.10:FF:000017">
    <property type="entry name" value="Phospholipid-transporting ATPase"/>
    <property type="match status" value="1"/>
</dbReference>
<dbReference type="FunFam" id="3.40.50.1000:FF:000012">
    <property type="entry name" value="Phospholipid-transporting ATPase"/>
    <property type="match status" value="1"/>
</dbReference>
<dbReference type="Gene3D" id="3.40.1110.10">
    <property type="entry name" value="Calcium-transporting ATPase, cytoplasmic domain N"/>
    <property type="match status" value="1"/>
</dbReference>
<dbReference type="Gene3D" id="2.70.150.10">
    <property type="entry name" value="Calcium-transporting ATPase, cytoplasmic transduction domain A"/>
    <property type="match status" value="1"/>
</dbReference>
<dbReference type="Gene3D" id="3.40.50.1000">
    <property type="entry name" value="HAD superfamily/HAD-like"/>
    <property type="match status" value="1"/>
</dbReference>
<dbReference type="InterPro" id="IPR023299">
    <property type="entry name" value="ATPase_P-typ_cyto_dom_N"/>
</dbReference>
<dbReference type="InterPro" id="IPR018303">
    <property type="entry name" value="ATPase_P-typ_P_site"/>
</dbReference>
<dbReference type="InterPro" id="IPR023298">
    <property type="entry name" value="ATPase_P-typ_TM_dom_sf"/>
</dbReference>
<dbReference type="InterPro" id="IPR008250">
    <property type="entry name" value="ATPase_P-typ_transduc_dom_A_sf"/>
</dbReference>
<dbReference type="InterPro" id="IPR036412">
    <property type="entry name" value="HAD-like_sf"/>
</dbReference>
<dbReference type="InterPro" id="IPR023214">
    <property type="entry name" value="HAD_sf"/>
</dbReference>
<dbReference type="InterPro" id="IPR006539">
    <property type="entry name" value="P-type_ATPase_IV"/>
</dbReference>
<dbReference type="InterPro" id="IPR032631">
    <property type="entry name" value="P-type_ATPase_N"/>
</dbReference>
<dbReference type="InterPro" id="IPR001757">
    <property type="entry name" value="P_typ_ATPase"/>
</dbReference>
<dbReference type="InterPro" id="IPR032630">
    <property type="entry name" value="P_typ_ATPase_c"/>
</dbReference>
<dbReference type="InterPro" id="IPR044492">
    <property type="entry name" value="P_typ_ATPase_HD_dom"/>
</dbReference>
<dbReference type="NCBIfam" id="TIGR01652">
    <property type="entry name" value="ATPase-Plipid"/>
    <property type="match status" value="1"/>
</dbReference>
<dbReference type="NCBIfam" id="TIGR01494">
    <property type="entry name" value="ATPase_P-type"/>
    <property type="match status" value="3"/>
</dbReference>
<dbReference type="PANTHER" id="PTHR24092:SF38">
    <property type="entry name" value="PHOSPHOLIPID-TRANSPORTING ATPASE IG"/>
    <property type="match status" value="1"/>
</dbReference>
<dbReference type="PANTHER" id="PTHR24092">
    <property type="entry name" value="PROBABLE PHOSPHOLIPID-TRANSPORTING ATPASE"/>
    <property type="match status" value="1"/>
</dbReference>
<dbReference type="Pfam" id="PF13246">
    <property type="entry name" value="Cation_ATPase"/>
    <property type="match status" value="1"/>
</dbReference>
<dbReference type="Pfam" id="PF00122">
    <property type="entry name" value="E1-E2_ATPase"/>
    <property type="match status" value="1"/>
</dbReference>
<dbReference type="Pfam" id="PF16212">
    <property type="entry name" value="PhoLip_ATPase_C"/>
    <property type="match status" value="1"/>
</dbReference>
<dbReference type="Pfam" id="PF16209">
    <property type="entry name" value="PhoLip_ATPase_N"/>
    <property type="match status" value="1"/>
</dbReference>
<dbReference type="SFLD" id="SFLDG00002">
    <property type="entry name" value="C1.7:_P-type_atpase_like"/>
    <property type="match status" value="1"/>
</dbReference>
<dbReference type="SFLD" id="SFLDF00027">
    <property type="entry name" value="p-type_atpase"/>
    <property type="match status" value="1"/>
</dbReference>
<dbReference type="SUPFAM" id="SSF81653">
    <property type="entry name" value="Calcium ATPase, transduction domain A"/>
    <property type="match status" value="1"/>
</dbReference>
<dbReference type="SUPFAM" id="SSF81665">
    <property type="entry name" value="Calcium ATPase, transmembrane domain M"/>
    <property type="match status" value="1"/>
</dbReference>
<dbReference type="SUPFAM" id="SSF56784">
    <property type="entry name" value="HAD-like"/>
    <property type="match status" value="1"/>
</dbReference>
<dbReference type="SUPFAM" id="SSF81660">
    <property type="entry name" value="Metal cation-transporting ATPase, ATP-binding domain N"/>
    <property type="match status" value="1"/>
</dbReference>
<dbReference type="PROSITE" id="PS00154">
    <property type="entry name" value="ATPASE_E1_E2"/>
    <property type="match status" value="1"/>
</dbReference>